<accession>P24883</accession>
<sequence>MLVLVMVVLFTLVLLFVFYIGNFVLSCKDFYKNKISSFECGFVSIGKIQNSFSIHFFIMMLMFVIFDLEVVMFLGILVSDLNSLISFFMLLMFIFGGFYMEWWYGKLVWLI</sequence>
<organism>
    <name type="scientific">Ascaris suum</name>
    <name type="common">Pig roundworm</name>
    <name type="synonym">Ascaris lumbricoides</name>
    <dbReference type="NCBI Taxonomy" id="6253"/>
    <lineage>
        <taxon>Eukaryota</taxon>
        <taxon>Metazoa</taxon>
        <taxon>Ecdysozoa</taxon>
        <taxon>Nematoda</taxon>
        <taxon>Chromadorea</taxon>
        <taxon>Rhabditida</taxon>
        <taxon>Spirurina</taxon>
        <taxon>Ascaridomorpha</taxon>
        <taxon>Ascaridoidea</taxon>
        <taxon>Ascarididae</taxon>
        <taxon>Ascaris</taxon>
    </lineage>
</organism>
<name>NU3M_ASCSU</name>
<evidence type="ECO:0000250" key="1"/>
<evidence type="ECO:0000255" key="2"/>
<evidence type="ECO:0000305" key="3"/>
<reference key="1">
    <citation type="journal article" date="1992" name="Genetics">
        <title>The mitochondrial genomes of two nematodes, Caenorhabditis elegans and Ascaris suum.</title>
        <authorList>
            <person name="Okimoto R."/>
            <person name="Macfarlane J.L."/>
            <person name="Clary D.O."/>
            <person name="Wolstenholme D.R."/>
        </authorList>
    </citation>
    <scope>NUCLEOTIDE SEQUENCE [GENOMIC DNA]</scope>
    <source>
        <tissue>Body wall muscle</tissue>
        <tissue>Egg</tissue>
    </source>
</reference>
<dbReference type="EC" id="7.1.1.2"/>
<dbReference type="EMBL" id="X54253">
    <property type="protein sequence ID" value="CAA38173.1"/>
    <property type="molecule type" value="Genomic_DNA"/>
</dbReference>
<dbReference type="PIR" id="S26024">
    <property type="entry name" value="S26024"/>
</dbReference>
<dbReference type="RefSeq" id="NP_006951.1">
    <property type="nucleotide sequence ID" value="NC_001327.1"/>
</dbReference>
<dbReference type="SMR" id="P24883"/>
<dbReference type="GeneID" id="807669"/>
<dbReference type="CTD" id="4537"/>
<dbReference type="GO" id="GO:0031966">
    <property type="term" value="C:mitochondrial membrane"/>
    <property type="evidence" value="ECO:0007669"/>
    <property type="project" value="UniProtKB-SubCell"/>
</dbReference>
<dbReference type="GO" id="GO:0030964">
    <property type="term" value="C:NADH dehydrogenase complex"/>
    <property type="evidence" value="ECO:0007669"/>
    <property type="project" value="TreeGrafter"/>
</dbReference>
<dbReference type="GO" id="GO:0008137">
    <property type="term" value="F:NADH dehydrogenase (ubiquinone) activity"/>
    <property type="evidence" value="ECO:0007669"/>
    <property type="project" value="UniProtKB-EC"/>
</dbReference>
<dbReference type="Gene3D" id="1.20.58.1610">
    <property type="entry name" value="NADH:ubiquinone/plastoquinone oxidoreductase, chain 3"/>
    <property type="match status" value="1"/>
</dbReference>
<dbReference type="InterPro" id="IPR000440">
    <property type="entry name" value="NADH_UbQ/plastoQ_OxRdtase_su3"/>
</dbReference>
<dbReference type="InterPro" id="IPR038430">
    <property type="entry name" value="NDAH_ubi_oxred_su3_sf"/>
</dbReference>
<dbReference type="PANTHER" id="PTHR11058">
    <property type="entry name" value="NADH-UBIQUINONE OXIDOREDUCTASE CHAIN 3"/>
    <property type="match status" value="1"/>
</dbReference>
<dbReference type="PANTHER" id="PTHR11058:SF9">
    <property type="entry name" value="NADH-UBIQUINONE OXIDOREDUCTASE CHAIN 3"/>
    <property type="match status" value="1"/>
</dbReference>
<dbReference type="Pfam" id="PF00507">
    <property type="entry name" value="Oxidored_q4"/>
    <property type="match status" value="1"/>
</dbReference>
<comment type="function">
    <text evidence="1">Core subunit of the mitochondrial membrane respiratory chain NADH dehydrogenase (Complex I) that is believed to belong to the minimal assembly required for catalysis. Complex I functions in the transfer of electrons from NADH to the respiratory chain. The immediate electron acceptor for the enzyme is believed to be ubiquinone (By similarity).</text>
</comment>
<comment type="catalytic activity">
    <reaction>
        <text>a ubiquinone + NADH + 5 H(+)(in) = a ubiquinol + NAD(+) + 4 H(+)(out)</text>
        <dbReference type="Rhea" id="RHEA:29091"/>
        <dbReference type="Rhea" id="RHEA-COMP:9565"/>
        <dbReference type="Rhea" id="RHEA-COMP:9566"/>
        <dbReference type="ChEBI" id="CHEBI:15378"/>
        <dbReference type="ChEBI" id="CHEBI:16389"/>
        <dbReference type="ChEBI" id="CHEBI:17976"/>
        <dbReference type="ChEBI" id="CHEBI:57540"/>
        <dbReference type="ChEBI" id="CHEBI:57945"/>
        <dbReference type="EC" id="7.1.1.2"/>
    </reaction>
</comment>
<comment type="subcellular location">
    <subcellularLocation>
        <location evidence="1">Mitochondrion membrane</location>
        <topology evidence="1">Multi-pass membrane protein</topology>
    </subcellularLocation>
</comment>
<comment type="similarity">
    <text evidence="3">Belongs to the complex I subunit 3 family.</text>
</comment>
<proteinExistence type="inferred from homology"/>
<feature type="chain" id="PRO_0000117710" description="NADH-ubiquinone oxidoreductase chain 3">
    <location>
        <begin position="1"/>
        <end position="111"/>
    </location>
</feature>
<feature type="transmembrane region" description="Helical" evidence="2">
    <location>
        <begin position="1"/>
        <end position="21"/>
    </location>
</feature>
<feature type="transmembrane region" description="Helical" evidence="2">
    <location>
        <begin position="56"/>
        <end position="76"/>
    </location>
</feature>
<feature type="transmembrane region" description="Helical" evidence="2">
    <location>
        <begin position="84"/>
        <end position="104"/>
    </location>
</feature>
<geneLocation type="mitochondrion"/>
<protein>
    <recommendedName>
        <fullName>NADH-ubiquinone oxidoreductase chain 3</fullName>
        <ecNumber>7.1.1.2</ecNumber>
    </recommendedName>
    <alternativeName>
        <fullName>NADH dehydrogenase subunit 3</fullName>
    </alternativeName>
</protein>
<gene>
    <name type="primary">ND3</name>
</gene>
<keyword id="KW-0249">Electron transport</keyword>
<keyword id="KW-0472">Membrane</keyword>
<keyword id="KW-0496">Mitochondrion</keyword>
<keyword id="KW-0520">NAD</keyword>
<keyword id="KW-0679">Respiratory chain</keyword>
<keyword id="KW-1278">Translocase</keyword>
<keyword id="KW-0812">Transmembrane</keyword>
<keyword id="KW-1133">Transmembrane helix</keyword>
<keyword id="KW-0813">Transport</keyword>
<keyword id="KW-0830">Ubiquinone</keyword>